<reference key="1">
    <citation type="journal article" date="1997" name="Nature">
        <title>The nucleotide sequence of Saccharomyces cerevisiae chromosome XIII.</title>
        <authorList>
            <person name="Bowman S."/>
            <person name="Churcher C.M."/>
            <person name="Badcock K."/>
            <person name="Brown D."/>
            <person name="Chillingworth T."/>
            <person name="Connor R."/>
            <person name="Dedman K."/>
            <person name="Devlin K."/>
            <person name="Gentles S."/>
            <person name="Hamlin N."/>
            <person name="Hunt S."/>
            <person name="Jagels K."/>
            <person name="Lye G."/>
            <person name="Moule S."/>
            <person name="Odell C."/>
            <person name="Pearson D."/>
            <person name="Rajandream M.A."/>
            <person name="Rice P."/>
            <person name="Skelton J."/>
            <person name="Walsh S.V."/>
            <person name="Whitehead S."/>
            <person name="Barrell B.G."/>
        </authorList>
    </citation>
    <scope>NUCLEOTIDE SEQUENCE [LARGE SCALE GENOMIC DNA]</scope>
    <source>
        <strain>ATCC 204508 / S288c</strain>
    </source>
</reference>
<reference key="2">
    <citation type="journal article" date="2014" name="G3 (Bethesda)">
        <title>The reference genome sequence of Saccharomyces cerevisiae: Then and now.</title>
        <authorList>
            <person name="Engel S.R."/>
            <person name="Dietrich F.S."/>
            <person name="Fisk D.G."/>
            <person name="Binkley G."/>
            <person name="Balakrishnan R."/>
            <person name="Costanzo M.C."/>
            <person name="Dwight S.S."/>
            <person name="Hitz B.C."/>
            <person name="Karra K."/>
            <person name="Nash R.S."/>
            <person name="Weng S."/>
            <person name="Wong E.D."/>
            <person name="Lloyd P."/>
            <person name="Skrzypek M.S."/>
            <person name="Miyasato S.R."/>
            <person name="Simison M."/>
            <person name="Cherry J.M."/>
        </authorList>
    </citation>
    <scope>GENOME REANNOTATION</scope>
    <source>
        <strain>ATCC 204508 / S288c</strain>
    </source>
</reference>
<reference key="3">
    <citation type="journal article" date="2007" name="Genome Res.">
        <title>Approaching a complete repository of sequence-verified protein-encoding clones for Saccharomyces cerevisiae.</title>
        <authorList>
            <person name="Hu Y."/>
            <person name="Rolfs A."/>
            <person name="Bhullar B."/>
            <person name="Murthy T.V.S."/>
            <person name="Zhu C."/>
            <person name="Berger M.F."/>
            <person name="Camargo A.A."/>
            <person name="Kelley F."/>
            <person name="McCarron S."/>
            <person name="Jepson D."/>
            <person name="Richardson A."/>
            <person name="Raphael J."/>
            <person name="Moreira D."/>
            <person name="Taycher E."/>
            <person name="Zuo D."/>
            <person name="Mohr S."/>
            <person name="Kane M.F."/>
            <person name="Williamson J."/>
            <person name="Simpson A.J.G."/>
            <person name="Bulyk M.L."/>
            <person name="Harlow E."/>
            <person name="Marsischky G."/>
            <person name="Kolodner R.D."/>
            <person name="LaBaer J."/>
        </authorList>
    </citation>
    <scope>NUCLEOTIDE SEQUENCE [GENOMIC DNA]</scope>
    <source>
        <strain>ATCC 204508 / S288c</strain>
    </source>
</reference>
<reference key="4">
    <citation type="journal article" date="2003" name="Nature">
        <title>Global analysis of protein localization in budding yeast.</title>
        <authorList>
            <person name="Huh W.-K."/>
            <person name="Falvo J.V."/>
            <person name="Gerke L.C."/>
            <person name="Carroll A.S."/>
            <person name="Howson R.W."/>
            <person name="Weissman J.S."/>
            <person name="O'Shea E.K."/>
        </authorList>
    </citation>
    <scope>SUBCELLULAR LOCATION [LARGE SCALE ANALYSIS]</scope>
</reference>
<reference key="5">
    <citation type="journal article" date="2006" name="Proc. Natl. Acad. Sci. U.S.A.">
        <title>A global topology map of the Saccharomyces cerevisiae membrane proteome.</title>
        <authorList>
            <person name="Kim H."/>
            <person name="Melen K."/>
            <person name="Oesterberg M."/>
            <person name="von Heijne G."/>
        </authorList>
    </citation>
    <scope>TOPOLOGY [LARGE SCALE ANALYSIS]</scope>
    <source>
        <strain>ATCC 208353 / W303-1A</strain>
    </source>
</reference>
<reference key="6">
    <citation type="journal article" date="2008" name="Mol. Cell. Proteomics">
        <title>A multidimensional chromatography technology for in-depth phosphoproteome analysis.</title>
        <authorList>
            <person name="Albuquerque C.P."/>
            <person name="Smolka M.B."/>
            <person name="Payne S.H."/>
            <person name="Bafna V."/>
            <person name="Eng J."/>
            <person name="Zhou H."/>
        </authorList>
    </citation>
    <scope>IDENTIFICATION BY MASS SPECTROMETRY [LARGE SCALE ANALYSIS]</scope>
</reference>
<reference key="7">
    <citation type="journal article" date="2012" name="Proteomics">
        <title>Sites of ubiquitin attachment in Saccharomyces cerevisiae.</title>
        <authorList>
            <person name="Starita L.M."/>
            <person name="Lo R.S."/>
            <person name="Eng J.K."/>
            <person name="von Haller P.D."/>
            <person name="Fields S."/>
        </authorList>
    </citation>
    <scope>UBIQUITINATION [LARGE SCALE ANALYSIS] AT LYS-40</scope>
    <scope>IDENTIFICATION BY MASS SPECTROMETRY [LARGE SCALE ANALYSIS]</scope>
</reference>
<evidence type="ECO:0000255" key="1"/>
<evidence type="ECO:0000256" key="2">
    <source>
        <dbReference type="SAM" id="MobiDB-lite"/>
    </source>
</evidence>
<evidence type="ECO:0000269" key="3">
    <source>
    </source>
</evidence>
<evidence type="ECO:0000305" key="4"/>
<evidence type="ECO:0007744" key="5">
    <source>
    </source>
</evidence>
<gene>
    <name type="ordered locus">YMR253C</name>
    <name type="ORF">YM9920.07C</name>
</gene>
<proteinExistence type="evidence at protein level"/>
<organism>
    <name type="scientific">Saccharomyces cerevisiae (strain ATCC 204508 / S288c)</name>
    <name type="common">Baker's yeast</name>
    <dbReference type="NCBI Taxonomy" id="559292"/>
    <lineage>
        <taxon>Eukaryota</taxon>
        <taxon>Fungi</taxon>
        <taxon>Dikarya</taxon>
        <taxon>Ascomycota</taxon>
        <taxon>Saccharomycotina</taxon>
        <taxon>Saccharomycetes</taxon>
        <taxon>Saccharomycetales</taxon>
        <taxon>Saccharomycetaceae</taxon>
        <taxon>Saccharomyces</taxon>
    </lineage>
</organism>
<protein>
    <recommendedName>
        <fullName>Uncharacterized membrane protein YMR253C</fullName>
    </recommendedName>
</protein>
<name>YM87_YEAST</name>
<feature type="chain" id="PRO_0000203340" description="Uncharacterized membrane protein YMR253C">
    <location>
        <begin position="1"/>
        <end position="414"/>
    </location>
</feature>
<feature type="topological domain" description="Lumenal" evidence="1">
    <location>
        <begin position="1"/>
        <end position="66"/>
    </location>
</feature>
<feature type="transmembrane region" description="Helical" evidence="1">
    <location>
        <begin position="67"/>
        <end position="87"/>
    </location>
</feature>
<feature type="topological domain" description="Cytoplasmic" evidence="1">
    <location>
        <begin position="88"/>
        <end position="106"/>
    </location>
</feature>
<feature type="transmembrane region" description="Helical" evidence="1">
    <location>
        <begin position="107"/>
        <end position="127"/>
    </location>
</feature>
<feature type="topological domain" description="Lumenal" evidence="1">
    <location>
        <begin position="128"/>
        <end position="144"/>
    </location>
</feature>
<feature type="transmembrane region" description="Helical" evidence="1">
    <location>
        <begin position="145"/>
        <end position="167"/>
    </location>
</feature>
<feature type="topological domain" description="Cytoplasmic" evidence="1">
    <location>
        <begin position="168"/>
        <end position="171"/>
    </location>
</feature>
<feature type="transmembrane region" description="Helical" evidence="1">
    <location>
        <begin position="172"/>
        <end position="191"/>
    </location>
</feature>
<feature type="topological domain" description="Lumenal" evidence="1">
    <location>
        <begin position="192"/>
        <end position="199"/>
    </location>
</feature>
<feature type="transmembrane region" description="Helical" evidence="1">
    <location>
        <begin position="200"/>
        <end position="220"/>
    </location>
</feature>
<feature type="topological domain" description="Cytoplasmic" evidence="1">
    <location>
        <begin position="221"/>
        <end position="241"/>
    </location>
</feature>
<feature type="transmembrane region" description="Helical" evidence="1">
    <location>
        <begin position="242"/>
        <end position="262"/>
    </location>
</feature>
<feature type="topological domain" description="Lumenal" evidence="1">
    <location>
        <begin position="263"/>
        <end position="269"/>
    </location>
</feature>
<feature type="transmembrane region" description="Helical" evidence="1">
    <location>
        <begin position="270"/>
        <end position="290"/>
    </location>
</feature>
<feature type="topological domain" description="Cytoplasmic" evidence="1">
    <location>
        <begin position="291"/>
        <end position="307"/>
    </location>
</feature>
<feature type="transmembrane region" description="Helical" evidence="1">
    <location>
        <begin position="308"/>
        <end position="328"/>
    </location>
</feature>
<feature type="topological domain" description="Lumenal" evidence="1">
    <location>
        <begin position="329"/>
        <end position="357"/>
    </location>
</feature>
<feature type="transmembrane region" description="Helical" evidence="1">
    <location>
        <begin position="358"/>
        <end position="378"/>
    </location>
</feature>
<feature type="topological domain" description="Cytoplasmic" evidence="1">
    <location>
        <begin position="379"/>
        <end position="414"/>
    </location>
</feature>
<feature type="domain" description="EamA 1">
    <location>
        <begin position="78"/>
        <end position="215"/>
    </location>
</feature>
<feature type="domain" description="EamA 2">
    <location>
        <begin position="253"/>
        <end position="379"/>
    </location>
</feature>
<feature type="region of interest" description="Disordered" evidence="2">
    <location>
        <begin position="20"/>
        <end position="51"/>
    </location>
</feature>
<feature type="compositionally biased region" description="Polar residues" evidence="2">
    <location>
        <begin position="25"/>
        <end position="51"/>
    </location>
</feature>
<feature type="cross-link" description="Glycyl lysine isopeptide (Lys-Gly) (interchain with G-Cter in ubiquitin)" evidence="5">
    <location>
        <position position="40"/>
    </location>
</feature>
<feature type="sequence conflict" description="In Ref. 3; AAU09774." evidence="4" ref="3">
    <original>F</original>
    <variation>L</variation>
    <location>
        <position position="278"/>
    </location>
</feature>
<comment type="subcellular location">
    <subcellularLocation>
        <location evidence="3">Membrane</location>
        <topology evidence="3">Multi-pass membrane protein</topology>
    </subcellularLocation>
    <text>Localizes to cytoplasmic punctate structures.</text>
</comment>
<comment type="similarity">
    <text evidence="4">To yeast YPL264c.</text>
</comment>
<keyword id="KW-1017">Isopeptide bond</keyword>
<keyword id="KW-0472">Membrane</keyword>
<keyword id="KW-1185">Reference proteome</keyword>
<keyword id="KW-0677">Repeat</keyword>
<keyword id="KW-0812">Transmembrane</keyword>
<keyword id="KW-1133">Transmembrane helix</keyword>
<keyword id="KW-0832">Ubl conjugation</keyword>
<sequence length="414" mass="46659">MNPSVPKVMKRENNTHLLVSKEMNDTSLQLPSTTRSLSPKESNSNEDFNVDGNETTLQRISKDYLKPNIGLVLLTVSYFFNSAMVVSTKVLENDPDDIANDRQIKPLQILLVRMVITYIGTLIYMYINKSTISDVPFGKPEVRKWLVLRGCTGFFGVFGMYYSLMYLTISDAVLITFLAPSLTIFLSWVILRERFTKVEALGSLISLLGVVLIVRPSFLFGTPELTDSSSQIVESSDPKSRLIATLVGLWGVLGMSCVYIIIRYIGKRAHAIMSVSYFSLITAIVSFIGINTIPSMKFQIPHSKKQWILFGNLGVSGFIFQLLLTMGIQRERAGRGSLMTYTQLLYAVFWDVALYKHWPNIWSWIGMIIIISATLWVIRIRAANNETTAKDLTPIIDDEENSIPLTEFDLSDSK</sequence>
<dbReference type="EMBL" id="Z48639">
    <property type="protein sequence ID" value="CAA88580.1"/>
    <property type="molecule type" value="Genomic_DNA"/>
</dbReference>
<dbReference type="EMBL" id="AY723857">
    <property type="protein sequence ID" value="AAU09774.1"/>
    <property type="molecule type" value="Genomic_DNA"/>
</dbReference>
<dbReference type="EMBL" id="BK006946">
    <property type="protein sequence ID" value="DAA10154.1"/>
    <property type="molecule type" value="Genomic_DNA"/>
</dbReference>
<dbReference type="PIR" id="S53075">
    <property type="entry name" value="S53075"/>
</dbReference>
<dbReference type="RefSeq" id="NP_013980.1">
    <property type="nucleotide sequence ID" value="NM_001182760.1"/>
</dbReference>
<dbReference type="SMR" id="Q04835"/>
<dbReference type="BioGRID" id="35432">
    <property type="interactions" value="41"/>
</dbReference>
<dbReference type="DIP" id="DIP-5067N"/>
<dbReference type="FunCoup" id="Q04835">
    <property type="interactions" value="117"/>
</dbReference>
<dbReference type="IntAct" id="Q04835">
    <property type="interactions" value="7"/>
</dbReference>
<dbReference type="MINT" id="Q04835"/>
<dbReference type="STRING" id="4932.YMR253C"/>
<dbReference type="iPTMnet" id="Q04835"/>
<dbReference type="PaxDb" id="4932-YMR253C"/>
<dbReference type="PeptideAtlas" id="Q04835"/>
<dbReference type="EnsemblFungi" id="YMR253C_mRNA">
    <property type="protein sequence ID" value="YMR253C"/>
    <property type="gene ID" value="YMR253C"/>
</dbReference>
<dbReference type="GeneID" id="855295"/>
<dbReference type="KEGG" id="sce:YMR253C"/>
<dbReference type="AGR" id="SGD:S000004866"/>
<dbReference type="SGD" id="S000004866">
    <property type="gene designation" value="YMR253C"/>
</dbReference>
<dbReference type="VEuPathDB" id="FungiDB:YMR253C"/>
<dbReference type="eggNOG" id="KOG4510">
    <property type="taxonomic scope" value="Eukaryota"/>
</dbReference>
<dbReference type="GeneTree" id="ENSGT00940000153249"/>
<dbReference type="HOGENOM" id="CLU_032828_4_1_1"/>
<dbReference type="InParanoid" id="Q04835"/>
<dbReference type="OMA" id="PIASCYV"/>
<dbReference type="OrthoDB" id="306876at2759"/>
<dbReference type="BioCyc" id="YEAST:G3O-32930-MONOMER"/>
<dbReference type="BioGRID-ORCS" id="855295">
    <property type="hits" value="0 hits in 10 CRISPR screens"/>
</dbReference>
<dbReference type="PRO" id="PR:Q04835"/>
<dbReference type="Proteomes" id="UP000002311">
    <property type="component" value="Chromosome XIII"/>
</dbReference>
<dbReference type="RNAct" id="Q04835">
    <property type="molecule type" value="protein"/>
</dbReference>
<dbReference type="GO" id="GO:0005737">
    <property type="term" value="C:cytoplasm"/>
    <property type="evidence" value="ECO:0007005"/>
    <property type="project" value="SGD"/>
</dbReference>
<dbReference type="GO" id="GO:0016020">
    <property type="term" value="C:membrane"/>
    <property type="evidence" value="ECO:0000318"/>
    <property type="project" value="GO_Central"/>
</dbReference>
<dbReference type="InterPro" id="IPR000620">
    <property type="entry name" value="EamA_dom"/>
</dbReference>
<dbReference type="PANTHER" id="PTHR22911">
    <property type="entry name" value="ACYL-MALONYL CONDENSING ENZYME-RELATED"/>
    <property type="match status" value="1"/>
</dbReference>
<dbReference type="PANTHER" id="PTHR22911:SF6">
    <property type="entry name" value="SOLUTE CARRIER FAMILY 35 MEMBER G1"/>
    <property type="match status" value="1"/>
</dbReference>
<dbReference type="Pfam" id="PF00892">
    <property type="entry name" value="EamA"/>
    <property type="match status" value="2"/>
</dbReference>
<dbReference type="SUPFAM" id="SSF103481">
    <property type="entry name" value="Multidrug resistance efflux transporter EmrE"/>
    <property type="match status" value="2"/>
</dbReference>
<accession>Q04835</accession>
<accession>D6W080</accession>
<accession>Q66R30</accession>